<dbReference type="EMBL" id="CH473957">
    <property type="protein sequence ID" value="EDL91332.1"/>
    <property type="molecule type" value="Genomic_DNA"/>
</dbReference>
<dbReference type="RefSeq" id="NP_001100078.1">
    <property type="nucleotide sequence ID" value="NM_001106608.1"/>
</dbReference>
<dbReference type="SMR" id="D4A7N1"/>
<dbReference type="BioGRID" id="255582">
    <property type="interactions" value="1"/>
</dbReference>
<dbReference type="FunCoup" id="D4A7N1">
    <property type="interactions" value="858"/>
</dbReference>
<dbReference type="IntAct" id="D4A7N1">
    <property type="interactions" value="1"/>
</dbReference>
<dbReference type="MINT" id="D4A7N1"/>
<dbReference type="STRING" id="10116.ENSRNOP00000073575"/>
<dbReference type="GlyGen" id="D4A7N1">
    <property type="glycosylation" value="1 site"/>
</dbReference>
<dbReference type="iPTMnet" id="D4A7N1"/>
<dbReference type="PhosphoSitePlus" id="D4A7N1"/>
<dbReference type="PaxDb" id="10116-ENSRNOP00000023122"/>
<dbReference type="PeptideAtlas" id="D4A7N1"/>
<dbReference type="GeneID" id="297436"/>
<dbReference type="KEGG" id="rno:297436"/>
<dbReference type="UCSC" id="RGD:1304561">
    <property type="organism name" value="rat"/>
</dbReference>
<dbReference type="AGR" id="RGD:1304561"/>
<dbReference type="CTD" id="84303"/>
<dbReference type="RGD" id="1304561">
    <property type="gene designation" value="Chchd6"/>
</dbReference>
<dbReference type="VEuPathDB" id="HostDB:ENSRNOG00000060248"/>
<dbReference type="eggNOG" id="KOG4083">
    <property type="taxonomic scope" value="Eukaryota"/>
</dbReference>
<dbReference type="HOGENOM" id="CLU_049040_0_0_1"/>
<dbReference type="InParanoid" id="D4A7N1"/>
<dbReference type="OrthoDB" id="69762at9989"/>
<dbReference type="PhylomeDB" id="D4A7N1"/>
<dbReference type="TreeFam" id="TF326279"/>
<dbReference type="PRO" id="PR:D4A7N1"/>
<dbReference type="Proteomes" id="UP000002494">
    <property type="component" value="Chromosome 4"/>
</dbReference>
<dbReference type="Proteomes" id="UP000234681">
    <property type="component" value="Chromosome 4"/>
</dbReference>
<dbReference type="Bgee" id="ENSRNOG00000060248">
    <property type="expression patterns" value="Expressed in testis and 20 other cell types or tissues"/>
</dbReference>
<dbReference type="GO" id="GO:0061617">
    <property type="term" value="C:MICOS complex"/>
    <property type="evidence" value="ECO:0000266"/>
    <property type="project" value="RGD"/>
</dbReference>
<dbReference type="GO" id="GO:0005743">
    <property type="term" value="C:mitochondrial inner membrane"/>
    <property type="evidence" value="ECO:0000250"/>
    <property type="project" value="UniProtKB"/>
</dbReference>
<dbReference type="GO" id="GO:0005739">
    <property type="term" value="C:mitochondrion"/>
    <property type="evidence" value="ECO:0000250"/>
    <property type="project" value="UniProtKB"/>
</dbReference>
<dbReference type="GO" id="GO:0042407">
    <property type="term" value="P:cristae formation"/>
    <property type="evidence" value="ECO:0000250"/>
    <property type="project" value="UniProtKB"/>
</dbReference>
<dbReference type="GO" id="GO:0006974">
    <property type="term" value="P:DNA damage response"/>
    <property type="evidence" value="ECO:0000250"/>
    <property type="project" value="UniProtKB"/>
</dbReference>
<dbReference type="InterPro" id="IPR010625">
    <property type="entry name" value="CHCH"/>
</dbReference>
<dbReference type="InterPro" id="IPR007964">
    <property type="entry name" value="MIC19/MIC25"/>
</dbReference>
<dbReference type="InterPro" id="IPR042860">
    <property type="entry name" value="MIC25"/>
</dbReference>
<dbReference type="PANTHER" id="PTHR47609">
    <property type="entry name" value="MICOS COMPLEX SUBUNIT MIC25"/>
    <property type="match status" value="1"/>
</dbReference>
<dbReference type="PANTHER" id="PTHR47609:SF1">
    <property type="entry name" value="MICOS COMPLEX SUBUNIT MIC25"/>
    <property type="match status" value="1"/>
</dbReference>
<dbReference type="Pfam" id="PF06747">
    <property type="entry name" value="CHCH"/>
    <property type="match status" value="1"/>
</dbReference>
<dbReference type="Pfam" id="PF05300">
    <property type="entry name" value="MIC19_MIC25"/>
    <property type="match status" value="1"/>
</dbReference>
<dbReference type="PROSITE" id="PS51808">
    <property type="entry name" value="CHCH"/>
    <property type="match status" value="1"/>
</dbReference>
<gene>
    <name type="primary">Chchd6</name>
    <name type="synonym">Mic25</name>
</gene>
<keyword id="KW-0175">Coiled coil</keyword>
<keyword id="KW-1015">Disulfide bond</keyword>
<keyword id="KW-0449">Lipoprotein</keyword>
<keyword id="KW-0472">Membrane</keyword>
<keyword id="KW-0496">Mitochondrion</keyword>
<keyword id="KW-0999">Mitochondrion inner membrane</keyword>
<keyword id="KW-0519">Myristate</keyword>
<keyword id="KW-0597">Phosphoprotein</keyword>
<keyword id="KW-1185">Reference proteome</keyword>
<comment type="function">
    <text evidence="2">Component of the MICOS complex, a large protein complex of the mitochondrial inner membrane that plays crucial roles in the maintenance of crista junctions, inner membrane architecture, and formation of contact sites to the outer membrane.</text>
</comment>
<comment type="subunit">
    <text evidence="2">Component of the mitochondrial contact site and cristae organizing system (MICOS) complex, composed of at least MICOS10/MIC10, CHCHD3/MIC19, CHCHD6/MIC25, APOOL/MIC27, IMMT/MIC60, APOO/MIC23/MIC26 and MICOS13/MIC13. This complex was also known under the names MINOS or MitOS complex. The MICOS complex associates with mitochondrial outer membrane proteins SAMM50, MTX1 and MTX2 (together described as components of the mitochondrial outer membrane sorting assembly machinery (SAM) complex) and DNAJC11, mitochondrial inner membrane protein TMEM11 and with HSPA9. The MICOS and SAM complexes together with DNAJC11 are part of a large protein complex spanning both membranes termed the mitochondrial intermembrane space bridging (MIB) complex. Interacts with DISC1. Interacts with IMMT/MIC60.</text>
</comment>
<comment type="subcellular location">
    <subcellularLocation>
        <location evidence="2">Mitochondrion inner membrane</location>
        <topology evidence="2">Lipid-anchor</topology>
    </subcellularLocation>
    <subcellularLocation>
        <location evidence="2">Mitochondrion</location>
    </subcellularLocation>
</comment>
<comment type="similarity">
    <text evidence="6">Belongs to the MICOS complex subunit Mic19 family. Metazoan Mic25 subfamily.</text>
</comment>
<evidence type="ECO:0000250" key="1">
    <source>
        <dbReference type="UniProtKB" id="Q91VN4"/>
    </source>
</evidence>
<evidence type="ECO:0000250" key="2">
    <source>
        <dbReference type="UniProtKB" id="Q9BRQ6"/>
    </source>
</evidence>
<evidence type="ECO:0000255" key="3"/>
<evidence type="ECO:0000255" key="4">
    <source>
        <dbReference type="PROSITE-ProRule" id="PRU01150"/>
    </source>
</evidence>
<evidence type="ECO:0000256" key="5">
    <source>
        <dbReference type="SAM" id="MobiDB-lite"/>
    </source>
</evidence>
<evidence type="ECO:0000305" key="6"/>
<evidence type="ECO:0007744" key="7">
    <source>
    </source>
</evidence>
<protein>
    <recommendedName>
        <fullName>MICOS complex subunit Mic25</fullName>
    </recommendedName>
    <alternativeName>
        <fullName>Coiled-coil-helix-coiled-coil-helix domain-containing protein 6</fullName>
    </alternativeName>
</protein>
<organism>
    <name type="scientific">Rattus norvegicus</name>
    <name type="common">Rat</name>
    <dbReference type="NCBI Taxonomy" id="10116"/>
    <lineage>
        <taxon>Eukaryota</taxon>
        <taxon>Metazoa</taxon>
        <taxon>Chordata</taxon>
        <taxon>Craniata</taxon>
        <taxon>Vertebrata</taxon>
        <taxon>Euteleostomi</taxon>
        <taxon>Mammalia</taxon>
        <taxon>Eutheria</taxon>
        <taxon>Euarchontoglires</taxon>
        <taxon>Glires</taxon>
        <taxon>Rodentia</taxon>
        <taxon>Myomorpha</taxon>
        <taxon>Muroidea</taxon>
        <taxon>Muridae</taxon>
        <taxon>Murinae</taxon>
        <taxon>Rattus</taxon>
    </lineage>
</organism>
<feature type="initiator methionine" description="Removed" evidence="3">
    <location>
        <position position="1"/>
    </location>
</feature>
<feature type="chain" id="PRO_0000416909" description="MICOS complex subunit Mic25">
    <location>
        <begin position="2"/>
        <end position="261"/>
    </location>
</feature>
<feature type="domain" description="CHCH" evidence="4">
    <location>
        <begin position="220"/>
        <end position="261"/>
    </location>
</feature>
<feature type="region of interest" description="Disordered" evidence="5">
    <location>
        <begin position="39"/>
        <end position="59"/>
    </location>
</feature>
<feature type="region of interest" description="Disordered" evidence="5">
    <location>
        <begin position="81"/>
        <end position="114"/>
    </location>
</feature>
<feature type="region of interest" description="Disordered" evidence="5">
    <location>
        <begin position="140"/>
        <end position="165"/>
    </location>
</feature>
<feature type="coiled-coil region" evidence="3">
    <location>
        <begin position="109"/>
        <end position="202"/>
    </location>
</feature>
<feature type="short sequence motif" description="Cx9C motif 1" evidence="4">
    <location>
        <begin position="223"/>
        <end position="233"/>
    </location>
</feature>
<feature type="short sequence motif" description="Cx9C motif 2" evidence="4">
    <location>
        <begin position="244"/>
        <end position="254"/>
    </location>
</feature>
<feature type="compositionally biased region" description="Basic and acidic residues" evidence="5">
    <location>
        <begin position="154"/>
        <end position="165"/>
    </location>
</feature>
<feature type="modified residue" description="Phosphoserine" evidence="2">
    <location>
        <position position="13"/>
    </location>
</feature>
<feature type="modified residue" description="Phosphoserine" evidence="1">
    <location>
        <position position="31"/>
    </location>
</feature>
<feature type="modified residue" description="Phosphoserine" evidence="7">
    <location>
        <position position="33"/>
    </location>
</feature>
<feature type="lipid moiety-binding region" description="N-myristoyl glycine" evidence="3">
    <location>
        <position position="2"/>
    </location>
</feature>
<feature type="disulfide bond" evidence="4">
    <location>
        <begin position="223"/>
        <end position="254"/>
    </location>
</feature>
<feature type="disulfide bond" evidence="4">
    <location>
        <begin position="233"/>
        <end position="244"/>
    </location>
</feature>
<reference key="1">
    <citation type="journal article" date="2004" name="Nature">
        <title>Genome sequence of the Brown Norway rat yields insights into mammalian evolution.</title>
        <authorList>
            <person name="Gibbs R.A."/>
            <person name="Weinstock G.M."/>
            <person name="Metzker M.L."/>
            <person name="Muzny D.M."/>
            <person name="Sodergren E.J."/>
            <person name="Scherer S."/>
            <person name="Scott G."/>
            <person name="Steffen D."/>
            <person name="Worley K.C."/>
            <person name="Burch P.E."/>
            <person name="Okwuonu G."/>
            <person name="Hines S."/>
            <person name="Lewis L."/>
            <person name="Deramo C."/>
            <person name="Delgado O."/>
            <person name="Dugan-Rocha S."/>
            <person name="Miner G."/>
            <person name="Morgan M."/>
            <person name="Hawes A."/>
            <person name="Gill R."/>
            <person name="Holt R.A."/>
            <person name="Adams M.D."/>
            <person name="Amanatides P.G."/>
            <person name="Baden-Tillson H."/>
            <person name="Barnstead M."/>
            <person name="Chin S."/>
            <person name="Evans C.A."/>
            <person name="Ferriera S."/>
            <person name="Fosler C."/>
            <person name="Glodek A."/>
            <person name="Gu Z."/>
            <person name="Jennings D."/>
            <person name="Kraft C.L."/>
            <person name="Nguyen T."/>
            <person name="Pfannkoch C.M."/>
            <person name="Sitter C."/>
            <person name="Sutton G.G."/>
            <person name="Venter J.C."/>
            <person name="Woodage T."/>
            <person name="Smith D."/>
            <person name="Lee H.-M."/>
            <person name="Gustafson E."/>
            <person name="Cahill P."/>
            <person name="Kana A."/>
            <person name="Doucette-Stamm L."/>
            <person name="Weinstock K."/>
            <person name="Fechtel K."/>
            <person name="Weiss R.B."/>
            <person name="Dunn D.M."/>
            <person name="Green E.D."/>
            <person name="Blakesley R.W."/>
            <person name="Bouffard G.G."/>
            <person name="De Jong P.J."/>
            <person name="Osoegawa K."/>
            <person name="Zhu B."/>
            <person name="Marra M."/>
            <person name="Schein J."/>
            <person name="Bosdet I."/>
            <person name="Fjell C."/>
            <person name="Jones S."/>
            <person name="Krzywinski M."/>
            <person name="Mathewson C."/>
            <person name="Siddiqui A."/>
            <person name="Wye N."/>
            <person name="McPherson J."/>
            <person name="Zhao S."/>
            <person name="Fraser C.M."/>
            <person name="Shetty J."/>
            <person name="Shatsman S."/>
            <person name="Geer K."/>
            <person name="Chen Y."/>
            <person name="Abramzon S."/>
            <person name="Nierman W.C."/>
            <person name="Havlak P.H."/>
            <person name="Chen R."/>
            <person name="Durbin K.J."/>
            <person name="Egan A."/>
            <person name="Ren Y."/>
            <person name="Song X.-Z."/>
            <person name="Li B."/>
            <person name="Liu Y."/>
            <person name="Qin X."/>
            <person name="Cawley S."/>
            <person name="Cooney A.J."/>
            <person name="D'Souza L.M."/>
            <person name="Martin K."/>
            <person name="Wu J.Q."/>
            <person name="Gonzalez-Garay M.L."/>
            <person name="Jackson A.R."/>
            <person name="Kalafus K.J."/>
            <person name="McLeod M.P."/>
            <person name="Milosavljevic A."/>
            <person name="Virk D."/>
            <person name="Volkov A."/>
            <person name="Wheeler D.A."/>
            <person name="Zhang Z."/>
            <person name="Bailey J.A."/>
            <person name="Eichler E.E."/>
            <person name="Tuzun E."/>
            <person name="Birney E."/>
            <person name="Mongin E."/>
            <person name="Ureta-Vidal A."/>
            <person name="Woodwark C."/>
            <person name="Zdobnov E."/>
            <person name="Bork P."/>
            <person name="Suyama M."/>
            <person name="Torrents D."/>
            <person name="Alexandersson M."/>
            <person name="Trask B.J."/>
            <person name="Young J.M."/>
            <person name="Huang H."/>
            <person name="Wang H."/>
            <person name="Xing H."/>
            <person name="Daniels S."/>
            <person name="Gietzen D."/>
            <person name="Schmidt J."/>
            <person name="Stevens K."/>
            <person name="Vitt U."/>
            <person name="Wingrove J."/>
            <person name="Camara F."/>
            <person name="Mar Alba M."/>
            <person name="Abril J.F."/>
            <person name="Guigo R."/>
            <person name="Smit A."/>
            <person name="Dubchak I."/>
            <person name="Rubin E.M."/>
            <person name="Couronne O."/>
            <person name="Poliakov A."/>
            <person name="Huebner N."/>
            <person name="Ganten D."/>
            <person name="Goesele C."/>
            <person name="Hummel O."/>
            <person name="Kreitler T."/>
            <person name="Lee Y.-A."/>
            <person name="Monti J."/>
            <person name="Schulz H."/>
            <person name="Zimdahl H."/>
            <person name="Himmelbauer H."/>
            <person name="Lehrach H."/>
            <person name="Jacob H.J."/>
            <person name="Bromberg S."/>
            <person name="Gullings-Handley J."/>
            <person name="Jensen-Seaman M.I."/>
            <person name="Kwitek A.E."/>
            <person name="Lazar J."/>
            <person name="Pasko D."/>
            <person name="Tonellato P.J."/>
            <person name="Twigger S."/>
            <person name="Ponting C.P."/>
            <person name="Duarte J.M."/>
            <person name="Rice S."/>
            <person name="Goodstadt L."/>
            <person name="Beatson S.A."/>
            <person name="Emes R.D."/>
            <person name="Winter E.E."/>
            <person name="Webber C."/>
            <person name="Brandt P."/>
            <person name="Nyakatura G."/>
            <person name="Adetobi M."/>
            <person name="Chiaromonte F."/>
            <person name="Elnitski L."/>
            <person name="Eswara P."/>
            <person name="Hardison R.C."/>
            <person name="Hou M."/>
            <person name="Kolbe D."/>
            <person name="Makova K."/>
            <person name="Miller W."/>
            <person name="Nekrutenko A."/>
            <person name="Riemer C."/>
            <person name="Schwartz S."/>
            <person name="Taylor J."/>
            <person name="Yang S."/>
            <person name="Zhang Y."/>
            <person name="Lindpaintner K."/>
            <person name="Andrews T.D."/>
            <person name="Caccamo M."/>
            <person name="Clamp M."/>
            <person name="Clarke L."/>
            <person name="Curwen V."/>
            <person name="Durbin R.M."/>
            <person name="Eyras E."/>
            <person name="Searle S.M."/>
            <person name="Cooper G.M."/>
            <person name="Batzoglou S."/>
            <person name="Brudno M."/>
            <person name="Sidow A."/>
            <person name="Stone E.A."/>
            <person name="Payseur B.A."/>
            <person name="Bourque G."/>
            <person name="Lopez-Otin C."/>
            <person name="Puente X.S."/>
            <person name="Chakrabarti K."/>
            <person name="Chatterji S."/>
            <person name="Dewey C."/>
            <person name="Pachter L."/>
            <person name="Bray N."/>
            <person name="Yap V.B."/>
            <person name="Caspi A."/>
            <person name="Tesler G."/>
            <person name="Pevzner P.A."/>
            <person name="Haussler D."/>
            <person name="Roskin K.M."/>
            <person name="Baertsch R."/>
            <person name="Clawson H."/>
            <person name="Furey T.S."/>
            <person name="Hinrichs A.S."/>
            <person name="Karolchik D."/>
            <person name="Kent W.J."/>
            <person name="Rosenbloom K.R."/>
            <person name="Trumbower H."/>
            <person name="Weirauch M."/>
            <person name="Cooper D.N."/>
            <person name="Stenson P.D."/>
            <person name="Ma B."/>
            <person name="Brent M."/>
            <person name="Arumugam M."/>
            <person name="Shteynberg D."/>
            <person name="Copley R.R."/>
            <person name="Taylor M.S."/>
            <person name="Riethman H."/>
            <person name="Mudunuri U."/>
            <person name="Peterson J."/>
            <person name="Guyer M."/>
            <person name="Felsenfeld A."/>
            <person name="Old S."/>
            <person name="Mockrin S."/>
            <person name="Collins F.S."/>
        </authorList>
    </citation>
    <scope>NUCLEOTIDE SEQUENCE [LARGE SCALE GENOMIC DNA]</scope>
    <source>
        <strain>Brown Norway</strain>
    </source>
</reference>
<reference key="2">
    <citation type="submission" date="2005-07" db="EMBL/GenBank/DDBJ databases">
        <authorList>
            <person name="Mural R.J."/>
            <person name="Adams M.D."/>
            <person name="Myers E.W."/>
            <person name="Smith H.O."/>
            <person name="Venter J.C."/>
        </authorList>
    </citation>
    <scope>NUCLEOTIDE SEQUENCE [LARGE SCALE GENOMIC DNA]</scope>
    <source>
        <strain>Brown Norway</strain>
    </source>
</reference>
<reference key="3">
    <citation type="journal article" date="2012" name="Nat. Commun.">
        <title>Quantitative maps of protein phosphorylation sites across 14 different rat organs and tissues.</title>
        <authorList>
            <person name="Lundby A."/>
            <person name="Secher A."/>
            <person name="Lage K."/>
            <person name="Nordsborg N.B."/>
            <person name="Dmytriyev A."/>
            <person name="Lundby C."/>
            <person name="Olsen J.V."/>
        </authorList>
    </citation>
    <scope>PHOSPHORYLATION [LARGE SCALE ANALYSIS] AT SER-33</scope>
    <scope>IDENTIFICATION BY MASS SPECTROMETRY [LARGE SCALE ANALYSIS]</scope>
</reference>
<name>MIC25_RAT</name>
<sequence>MGSSESAEARRVSFEMDEEERVRVLQGIRLSESVVNRMKDCSQPSAGEQLAPGPGPECSVPVPTVPQPTIPVLTVPSPSVCGPAEGTYKAPQGDFKVSRAENSDGQQSSAVKEDLKKFQQEQLAVQDELVKVARKEKEATEKHLKASLPKKKATHEQQQSDRLTRELKNREAELSRRDTFYKEQQERIQEKNAELYKLSSQQFHEAASKAESTIKPRRVEPVCSGLQAQILRCYRDHLHEVLLCSDLAKAYQHCVSTARKG</sequence>
<proteinExistence type="evidence at protein level"/>
<accession>D4A7N1</accession>